<gene>
    <name evidence="1" type="primary">ndufaf7</name>
    <name evidence="3" type="ORF">TEgg135j01.1</name>
</gene>
<keyword id="KW-0489">Methyltransferase</keyword>
<keyword id="KW-0496">Mitochondrion</keyword>
<keyword id="KW-1185">Reference proteome</keyword>
<keyword id="KW-0808">Transferase</keyword>
<keyword id="KW-0809">Transit peptide</keyword>
<comment type="function">
    <text evidence="1">Arginine methyltransferase involved in the assembly or stability of mitochondrial NADH:ubiquinone oxidoreductase complex (complex I). Acts by mediating symmetric dimethylation of 'Arg-118' of ndufs2 after it assembles into the complex I, stabilizing the early intermediate complex.</text>
</comment>
<comment type="catalytic activity">
    <reaction evidence="1">
        <text>L-arginyl-[protein] + 2 S-adenosyl-L-methionine = N(omega),N(omega)'-dimethyl-L-arginyl-[protein] + 2 S-adenosyl-L-homocysteine + 2 H(+)</text>
        <dbReference type="Rhea" id="RHEA:48108"/>
        <dbReference type="Rhea" id="RHEA-COMP:10532"/>
        <dbReference type="Rhea" id="RHEA-COMP:11992"/>
        <dbReference type="ChEBI" id="CHEBI:15378"/>
        <dbReference type="ChEBI" id="CHEBI:29965"/>
        <dbReference type="ChEBI" id="CHEBI:57856"/>
        <dbReference type="ChEBI" id="CHEBI:59789"/>
        <dbReference type="ChEBI" id="CHEBI:88221"/>
        <dbReference type="EC" id="2.1.1.320"/>
    </reaction>
</comment>
<comment type="subcellular location">
    <subcellularLocation>
        <location evidence="1">Mitochondrion</location>
    </subcellularLocation>
</comment>
<comment type="similarity">
    <text evidence="4">Belongs to the NDUFAF7 family.</text>
</comment>
<feature type="transit peptide" description="Mitochondrion" evidence="2">
    <location>
        <begin position="1"/>
        <end position="31"/>
    </location>
</feature>
<feature type="chain" id="PRO_0000315677" description="Protein arginine methyltransferase NDUFAF7, mitochondrial">
    <location>
        <begin position="32"/>
        <end position="430"/>
    </location>
</feature>
<dbReference type="EC" id="2.1.1.320" evidence="1"/>
<dbReference type="EMBL" id="CR761995">
    <property type="protein sequence ID" value="CAJ81481.1"/>
    <property type="molecule type" value="mRNA"/>
</dbReference>
<dbReference type="EMBL" id="BC091018">
    <property type="protein sequence ID" value="AAH91018.1"/>
    <property type="molecule type" value="mRNA"/>
</dbReference>
<dbReference type="RefSeq" id="NP_001016145.1">
    <property type="nucleotide sequence ID" value="NM_001016145.2"/>
</dbReference>
<dbReference type="SMR" id="Q5BKM6"/>
<dbReference type="FunCoup" id="Q5BKM6">
    <property type="interactions" value="1845"/>
</dbReference>
<dbReference type="STRING" id="8364.ENSXETP00000045472"/>
<dbReference type="PaxDb" id="8364-ENSXETP00000001432"/>
<dbReference type="DNASU" id="548899"/>
<dbReference type="GeneID" id="548899"/>
<dbReference type="KEGG" id="xtr:548899"/>
<dbReference type="AGR" id="Xenbase:XB-GENE-996599"/>
<dbReference type="CTD" id="55471"/>
<dbReference type="Xenbase" id="XB-GENE-996599">
    <property type="gene designation" value="ndufaf7"/>
</dbReference>
<dbReference type="eggNOG" id="KOG2901">
    <property type="taxonomic scope" value="Eukaryota"/>
</dbReference>
<dbReference type="InParanoid" id="Q5BKM6"/>
<dbReference type="OMA" id="YYHPQRN"/>
<dbReference type="OrthoDB" id="438553at2759"/>
<dbReference type="Reactome" id="R-XTR-6799198">
    <property type="pathway name" value="Complex I biogenesis"/>
</dbReference>
<dbReference type="Proteomes" id="UP000008143">
    <property type="component" value="Chromosome 5"/>
</dbReference>
<dbReference type="Bgee" id="ENSXETG00000000653">
    <property type="expression patterns" value="Expressed in egg cell and 13 other cell types or tissues"/>
</dbReference>
<dbReference type="GO" id="GO:0005739">
    <property type="term" value="C:mitochondrion"/>
    <property type="evidence" value="ECO:0000250"/>
    <property type="project" value="UniProtKB"/>
</dbReference>
<dbReference type="GO" id="GO:0035243">
    <property type="term" value="F:protein-arginine omega-N symmetric methyltransferase activity"/>
    <property type="evidence" value="ECO:0000250"/>
    <property type="project" value="UniProtKB"/>
</dbReference>
<dbReference type="GO" id="GO:0032981">
    <property type="term" value="P:mitochondrial respiratory chain complex I assembly"/>
    <property type="evidence" value="ECO:0000250"/>
    <property type="project" value="UniProtKB"/>
</dbReference>
<dbReference type="GO" id="GO:0019918">
    <property type="term" value="P:peptidyl-arginine methylation, to symmetrical-dimethyl arginine"/>
    <property type="evidence" value="ECO:0000250"/>
    <property type="project" value="UniProtKB"/>
</dbReference>
<dbReference type="FunFam" id="3.40.50.12710:FF:000001">
    <property type="entry name" value="Protein arginine methyltransferase NDUFAF7"/>
    <property type="match status" value="1"/>
</dbReference>
<dbReference type="Gene3D" id="3.40.50.12710">
    <property type="match status" value="1"/>
</dbReference>
<dbReference type="InterPro" id="IPR003788">
    <property type="entry name" value="NDUFAF7"/>
</dbReference>
<dbReference type="InterPro" id="IPR038375">
    <property type="entry name" value="NDUFAF7_sf"/>
</dbReference>
<dbReference type="InterPro" id="IPR029063">
    <property type="entry name" value="SAM-dependent_MTases_sf"/>
</dbReference>
<dbReference type="PANTHER" id="PTHR12049">
    <property type="entry name" value="PROTEIN ARGININE METHYLTRANSFERASE NDUFAF7, MITOCHONDRIAL"/>
    <property type="match status" value="1"/>
</dbReference>
<dbReference type="PANTHER" id="PTHR12049:SF7">
    <property type="entry name" value="PROTEIN ARGININE METHYLTRANSFERASE NDUFAF7, MITOCHONDRIAL"/>
    <property type="match status" value="1"/>
</dbReference>
<dbReference type="Pfam" id="PF02636">
    <property type="entry name" value="Methyltransf_28"/>
    <property type="match status" value="1"/>
</dbReference>
<dbReference type="SUPFAM" id="SSF53335">
    <property type="entry name" value="S-adenosyl-L-methionine-dependent methyltransferases"/>
    <property type="match status" value="1"/>
</dbReference>
<name>NDUF7_XENTR</name>
<organism>
    <name type="scientific">Xenopus tropicalis</name>
    <name type="common">Western clawed frog</name>
    <name type="synonym">Silurana tropicalis</name>
    <dbReference type="NCBI Taxonomy" id="8364"/>
    <lineage>
        <taxon>Eukaryota</taxon>
        <taxon>Metazoa</taxon>
        <taxon>Chordata</taxon>
        <taxon>Craniata</taxon>
        <taxon>Vertebrata</taxon>
        <taxon>Euteleostomi</taxon>
        <taxon>Amphibia</taxon>
        <taxon>Batrachia</taxon>
        <taxon>Anura</taxon>
        <taxon>Pipoidea</taxon>
        <taxon>Pipidae</taxon>
        <taxon>Xenopodinae</taxon>
        <taxon>Xenopus</taxon>
        <taxon>Silurana</taxon>
    </lineage>
</organism>
<accession>Q5BKM6</accession>
<reference key="1">
    <citation type="submission" date="2006-10" db="EMBL/GenBank/DDBJ databases">
        <authorList>
            <consortium name="Sanger Xenopus tropicalis EST/cDNA project"/>
        </authorList>
    </citation>
    <scope>NUCLEOTIDE SEQUENCE [LARGE SCALE MRNA]</scope>
    <source>
        <tissue>Egg</tissue>
    </source>
</reference>
<reference key="2">
    <citation type="submission" date="2005-03" db="EMBL/GenBank/DDBJ databases">
        <authorList>
            <consortium name="NIH - Xenopus Gene Collection (XGC) project"/>
        </authorList>
    </citation>
    <scope>NUCLEOTIDE SEQUENCE [LARGE SCALE MRNA]</scope>
</reference>
<sequence>MSGLARLRKTAFLMVSASANCRIQRYQSSRTEKHQDSTSANALLNHLIFKIKSTGPITVSEYMREVLTNPVKGYYMHHDMLGEHGDFVTSPELSQIFGELLGVWCISEWMSAGKPKSLQLVELGPGRGTLTDDLLRVFSNFGRLLNSCDISVHLVEVSPKLSDIQAQRLTGKAIEVELDKNSPVYKKGITKTGFPVCWYQDIQDVPTGFSFYIAHEFFDALPIHKLQKTKDGWREILIDIDPGIPDKLRFVLGPNVSLVANTFVQDDEPRDHVEVCPSAAVIIQKLANQINSYGGAALIADYGHMGERTDTFRGFRAHKLHDVLSNPGTADLTADVDFNFMRRIVGEAASCLGPVTQHEFLKNMGIDIRLKVLLEKSSDVAVQKQLIHGYNILMNADQMGQRFKFFSVVPQSRLKTTMPPVAGFSKLLMH</sequence>
<protein>
    <recommendedName>
        <fullName evidence="1">Protein arginine methyltransferase NDUFAF7, mitochondrial</fullName>
        <ecNumber evidence="1">2.1.1.320</ecNumber>
    </recommendedName>
    <alternativeName>
        <fullName evidence="1">NADH dehydrogenase [ubiquinone] complex I, assembly factor 7</fullName>
    </alternativeName>
    <alternativeName>
        <fullName evidence="1">Protein midA homolog</fullName>
    </alternativeName>
</protein>
<evidence type="ECO:0000250" key="1">
    <source>
        <dbReference type="UniProtKB" id="Q7L592"/>
    </source>
</evidence>
<evidence type="ECO:0000255" key="2"/>
<evidence type="ECO:0000303" key="3">
    <source ref="1"/>
</evidence>
<evidence type="ECO:0000305" key="4"/>
<proteinExistence type="evidence at transcript level"/>